<organism>
    <name type="scientific">Thermobifida fusca (strain YX)</name>
    <dbReference type="NCBI Taxonomy" id="269800"/>
    <lineage>
        <taxon>Bacteria</taxon>
        <taxon>Bacillati</taxon>
        <taxon>Actinomycetota</taxon>
        <taxon>Actinomycetes</taxon>
        <taxon>Streptosporangiales</taxon>
        <taxon>Nocardiopsidaceae</taxon>
        <taxon>Thermobifida</taxon>
    </lineage>
</organism>
<keyword id="KW-0963">Cytoplasm</keyword>
<keyword id="KW-0489">Methyltransferase</keyword>
<keyword id="KW-0694">RNA-binding</keyword>
<keyword id="KW-0698">rRNA processing</keyword>
<keyword id="KW-0949">S-adenosyl-L-methionine</keyword>
<keyword id="KW-0808">Transferase</keyword>
<reference key="1">
    <citation type="journal article" date="2007" name="J. Bacteriol.">
        <title>Genome sequence and analysis of the soil cellulolytic actinomycete Thermobifida fusca YX.</title>
        <authorList>
            <person name="Lykidis A."/>
            <person name="Mavromatis K."/>
            <person name="Ivanova N."/>
            <person name="Anderson I."/>
            <person name="Land M."/>
            <person name="DiBartolo G."/>
            <person name="Martinez M."/>
            <person name="Lapidus A."/>
            <person name="Lucas S."/>
            <person name="Copeland A."/>
            <person name="Richardson P."/>
            <person name="Wilson D.B."/>
            <person name="Kyrpides N."/>
        </authorList>
    </citation>
    <scope>NUCLEOTIDE SEQUENCE [LARGE SCALE GENOMIC DNA]</scope>
    <source>
        <strain>YX</strain>
    </source>
</reference>
<name>RSMA_THEFY</name>
<protein>
    <recommendedName>
        <fullName evidence="1">Ribosomal RNA small subunit methyltransferase A</fullName>
        <ecNumber evidence="1">2.1.1.182</ecNumber>
    </recommendedName>
    <alternativeName>
        <fullName evidence="1">16S rRNA (adenine(1518)-N(6)/adenine(1519)-N(6))-dimethyltransferase</fullName>
    </alternativeName>
    <alternativeName>
        <fullName evidence="1">16S rRNA dimethyladenosine transferase</fullName>
    </alternativeName>
    <alternativeName>
        <fullName evidence="1">16S rRNA dimethylase</fullName>
    </alternativeName>
    <alternativeName>
        <fullName evidence="1">S-adenosylmethionine-6-N', N'-adenosyl(rRNA) dimethyltransferase</fullName>
    </alternativeName>
</protein>
<evidence type="ECO:0000255" key="1">
    <source>
        <dbReference type="HAMAP-Rule" id="MF_00607"/>
    </source>
</evidence>
<proteinExistence type="inferred from homology"/>
<comment type="function">
    <text evidence="1">Specifically dimethylates two adjacent adenosines (A1518 and A1519) in the loop of a conserved hairpin near the 3'-end of 16S rRNA in the 30S particle. May play a critical role in biogenesis of 30S subunits.</text>
</comment>
<comment type="catalytic activity">
    <reaction evidence="1">
        <text>adenosine(1518)/adenosine(1519) in 16S rRNA + 4 S-adenosyl-L-methionine = N(6)-dimethyladenosine(1518)/N(6)-dimethyladenosine(1519) in 16S rRNA + 4 S-adenosyl-L-homocysteine + 4 H(+)</text>
        <dbReference type="Rhea" id="RHEA:19609"/>
        <dbReference type="Rhea" id="RHEA-COMP:10232"/>
        <dbReference type="Rhea" id="RHEA-COMP:10233"/>
        <dbReference type="ChEBI" id="CHEBI:15378"/>
        <dbReference type="ChEBI" id="CHEBI:57856"/>
        <dbReference type="ChEBI" id="CHEBI:59789"/>
        <dbReference type="ChEBI" id="CHEBI:74411"/>
        <dbReference type="ChEBI" id="CHEBI:74493"/>
        <dbReference type="EC" id="2.1.1.182"/>
    </reaction>
</comment>
<comment type="subcellular location">
    <subcellularLocation>
        <location evidence="1">Cytoplasm</location>
    </subcellularLocation>
</comment>
<comment type="similarity">
    <text evidence="1">Belongs to the class I-like SAM-binding methyltransferase superfamily. rRNA adenine N(6)-methyltransferase family. RsmA subfamily.</text>
</comment>
<feature type="chain" id="PRO_0000257368" description="Ribosomal RNA small subunit methyltransferase A">
    <location>
        <begin position="1"/>
        <end position="287"/>
    </location>
</feature>
<feature type="binding site" evidence="1">
    <location>
        <position position="35"/>
    </location>
    <ligand>
        <name>S-adenosyl-L-methionine</name>
        <dbReference type="ChEBI" id="CHEBI:59789"/>
    </ligand>
</feature>
<feature type="binding site" evidence="1">
    <location>
        <position position="37"/>
    </location>
    <ligand>
        <name>S-adenosyl-L-methionine</name>
        <dbReference type="ChEBI" id="CHEBI:59789"/>
    </ligand>
</feature>
<feature type="binding site" evidence="1">
    <location>
        <position position="62"/>
    </location>
    <ligand>
        <name>S-adenosyl-L-methionine</name>
        <dbReference type="ChEBI" id="CHEBI:59789"/>
    </ligand>
</feature>
<feature type="binding site" evidence="1">
    <location>
        <position position="83"/>
    </location>
    <ligand>
        <name>S-adenosyl-L-methionine</name>
        <dbReference type="ChEBI" id="CHEBI:59789"/>
    </ligand>
</feature>
<feature type="binding site" evidence="1">
    <location>
        <position position="113"/>
    </location>
    <ligand>
        <name>S-adenosyl-L-methionine</name>
        <dbReference type="ChEBI" id="CHEBI:59789"/>
    </ligand>
</feature>
<feature type="binding site" evidence="1">
    <location>
        <position position="131"/>
    </location>
    <ligand>
        <name>S-adenosyl-L-methionine</name>
        <dbReference type="ChEBI" id="CHEBI:59789"/>
    </ligand>
</feature>
<gene>
    <name evidence="1" type="primary">rsmA</name>
    <name evidence="1" type="synonym">ksgA</name>
    <name type="ordered locus">Tfu_0405</name>
</gene>
<accession>Q47SX4</accession>
<sequence>MTESDSADARLLTPADVRRLAAQLGIRPTKTLGQNFVIDPGTVRRIVRAAQVSPDDVVVEVGPGLGSLTLALLPHVRHVTAVEIDPRLAEALPGTVADHAPAYAHRLRVVTADALRITELPDPQPTALVANLPYNVAVPVVLHLLNLLPSLEHGLVMVQAEVAERLAARPGDRAYGAPSAKIAWYADVRRAGAIGRTVFWPVPNVDSGLVALRRRPAPPTKASREDVFAVVDAAFAQRRKTLRAALSSWAGSAAAAEAALRSAGVDPRSRGETLGIADFARIAEHRP</sequence>
<dbReference type="EC" id="2.1.1.182" evidence="1"/>
<dbReference type="EMBL" id="CP000088">
    <property type="protein sequence ID" value="AAZ54443.1"/>
    <property type="molecule type" value="Genomic_DNA"/>
</dbReference>
<dbReference type="RefSeq" id="WP_011290852.1">
    <property type="nucleotide sequence ID" value="NC_007333.1"/>
</dbReference>
<dbReference type="SMR" id="Q47SX4"/>
<dbReference type="STRING" id="269800.Tfu_0405"/>
<dbReference type="KEGG" id="tfu:Tfu_0405"/>
<dbReference type="eggNOG" id="COG0030">
    <property type="taxonomic scope" value="Bacteria"/>
</dbReference>
<dbReference type="HOGENOM" id="CLU_041220_1_1_11"/>
<dbReference type="OrthoDB" id="9814755at2"/>
<dbReference type="GO" id="GO:0005829">
    <property type="term" value="C:cytosol"/>
    <property type="evidence" value="ECO:0007669"/>
    <property type="project" value="TreeGrafter"/>
</dbReference>
<dbReference type="GO" id="GO:0052908">
    <property type="term" value="F:16S rRNA (adenine(1518)-N(6)/adenine(1519)-N(6))-dimethyltransferase activity"/>
    <property type="evidence" value="ECO:0007669"/>
    <property type="project" value="UniProtKB-EC"/>
</dbReference>
<dbReference type="GO" id="GO:0003723">
    <property type="term" value="F:RNA binding"/>
    <property type="evidence" value="ECO:0007669"/>
    <property type="project" value="UniProtKB-KW"/>
</dbReference>
<dbReference type="CDD" id="cd02440">
    <property type="entry name" value="AdoMet_MTases"/>
    <property type="match status" value="1"/>
</dbReference>
<dbReference type="FunFam" id="1.10.8.100:FF:000003">
    <property type="entry name" value="Ribosomal RNA small subunit methyltransferase A"/>
    <property type="match status" value="1"/>
</dbReference>
<dbReference type="FunFam" id="3.40.50.150:FF:000023">
    <property type="entry name" value="Ribosomal RNA small subunit methyltransferase A"/>
    <property type="match status" value="1"/>
</dbReference>
<dbReference type="Gene3D" id="1.10.8.100">
    <property type="entry name" value="Ribosomal RNA adenine dimethylase-like, domain 2"/>
    <property type="match status" value="1"/>
</dbReference>
<dbReference type="Gene3D" id="3.40.50.150">
    <property type="entry name" value="Vaccinia Virus protein VP39"/>
    <property type="match status" value="1"/>
</dbReference>
<dbReference type="HAMAP" id="MF_00607">
    <property type="entry name" value="16SrRNA_methyltr_A"/>
    <property type="match status" value="1"/>
</dbReference>
<dbReference type="InterPro" id="IPR001737">
    <property type="entry name" value="KsgA/Erm"/>
</dbReference>
<dbReference type="InterPro" id="IPR023165">
    <property type="entry name" value="rRNA_Ade_diMease-like_C"/>
</dbReference>
<dbReference type="InterPro" id="IPR020596">
    <property type="entry name" value="rRNA_Ade_Mease_Trfase_CS"/>
</dbReference>
<dbReference type="InterPro" id="IPR020598">
    <property type="entry name" value="rRNA_Ade_methylase_Trfase_N"/>
</dbReference>
<dbReference type="InterPro" id="IPR011530">
    <property type="entry name" value="rRNA_adenine_dimethylase"/>
</dbReference>
<dbReference type="InterPro" id="IPR029063">
    <property type="entry name" value="SAM-dependent_MTases_sf"/>
</dbReference>
<dbReference type="NCBIfam" id="TIGR00755">
    <property type="entry name" value="ksgA"/>
    <property type="match status" value="1"/>
</dbReference>
<dbReference type="PANTHER" id="PTHR11727">
    <property type="entry name" value="DIMETHYLADENOSINE TRANSFERASE"/>
    <property type="match status" value="1"/>
</dbReference>
<dbReference type="PANTHER" id="PTHR11727:SF7">
    <property type="entry name" value="DIMETHYLADENOSINE TRANSFERASE-RELATED"/>
    <property type="match status" value="1"/>
</dbReference>
<dbReference type="Pfam" id="PF00398">
    <property type="entry name" value="RrnaAD"/>
    <property type="match status" value="1"/>
</dbReference>
<dbReference type="SMART" id="SM00650">
    <property type="entry name" value="rADc"/>
    <property type="match status" value="1"/>
</dbReference>
<dbReference type="SUPFAM" id="SSF53335">
    <property type="entry name" value="S-adenosyl-L-methionine-dependent methyltransferases"/>
    <property type="match status" value="1"/>
</dbReference>
<dbReference type="PROSITE" id="PS01131">
    <property type="entry name" value="RRNA_A_DIMETH"/>
    <property type="match status" value="1"/>
</dbReference>
<dbReference type="PROSITE" id="PS51689">
    <property type="entry name" value="SAM_RNA_A_N6_MT"/>
    <property type="match status" value="1"/>
</dbReference>